<keyword id="KW-0964">Secreted</keyword>
<keyword id="KW-0732">Signal</keyword>
<keyword id="KW-0800">Toxin</keyword>
<dbReference type="GO" id="GO:0005615">
    <property type="term" value="C:extracellular space"/>
    <property type="evidence" value="ECO:0007669"/>
    <property type="project" value="TreeGrafter"/>
</dbReference>
<dbReference type="GO" id="GO:0008613">
    <property type="term" value="F:diuretic hormone activity"/>
    <property type="evidence" value="ECO:0007669"/>
    <property type="project" value="InterPro"/>
</dbReference>
<dbReference type="GO" id="GO:0001664">
    <property type="term" value="F:G protein-coupled receptor binding"/>
    <property type="evidence" value="ECO:0007669"/>
    <property type="project" value="TreeGrafter"/>
</dbReference>
<dbReference type="GO" id="GO:0090729">
    <property type="term" value="F:toxin activity"/>
    <property type="evidence" value="ECO:0007669"/>
    <property type="project" value="UniProtKB-KW"/>
</dbReference>
<dbReference type="GO" id="GO:0007589">
    <property type="term" value="P:body fluid secretion"/>
    <property type="evidence" value="ECO:0007669"/>
    <property type="project" value="InterPro"/>
</dbReference>
<dbReference type="InterPro" id="IPR034439">
    <property type="entry name" value="DH2-like"/>
</dbReference>
<dbReference type="PANTHER" id="PTHR41146">
    <property type="entry name" value="DIURETIC HORMONE CLASS 2"/>
    <property type="match status" value="1"/>
</dbReference>
<dbReference type="PANTHER" id="PTHR41146:SF1">
    <property type="entry name" value="DIURETIC HORMONE CLASS 2"/>
    <property type="match status" value="1"/>
</dbReference>
<proteinExistence type="inferred from homology"/>
<evidence type="ECO:0000255" key="1"/>
<evidence type="ECO:0000256" key="2">
    <source>
        <dbReference type="SAM" id="MobiDB-lite"/>
    </source>
</evidence>
<evidence type="ECO:0000303" key="3">
    <source>
    </source>
</evidence>
<evidence type="ECO:0000305" key="4"/>
<evidence type="ECO:0000305" key="5">
    <source>
    </source>
</evidence>
<protein>
    <recommendedName>
        <fullName evidence="3">U-scoloptoxin(21)-Sm2a</fullName>
        <shortName evidence="3">U-SLPTX(21)-Sm2a</shortName>
    </recommendedName>
</protein>
<accession>P0DQF3</accession>
<comment type="subcellular location">
    <subcellularLocation>
        <location evidence="5">Secreted</location>
    </subcellularLocation>
</comment>
<comment type="tissue specificity">
    <text evidence="5">Expressed by the venom gland.</text>
</comment>
<comment type="similarity">
    <text evidence="4">Belongs to the scoloptoxin-21 family.</text>
</comment>
<comment type="online information" name="National Center for Biotechnology Information (NCBI)">
    <link uri="https://www.ncbi.nlm.nih.gov/nuccore/GASH01000173"/>
</comment>
<sequence length="69" mass="7770">MFFLGFIIVCASEEQSDNRLPNIDFGLDRGHSGRMTAEYLMGLAAANDPNGPGRRRRSPIVREEILRHP</sequence>
<organism>
    <name type="scientific">Scolopendra morsitans</name>
    <name type="common">Tanzanian blue ringleg centipede</name>
    <dbReference type="NCBI Taxonomy" id="943129"/>
    <lineage>
        <taxon>Eukaryota</taxon>
        <taxon>Metazoa</taxon>
        <taxon>Ecdysozoa</taxon>
        <taxon>Arthropoda</taxon>
        <taxon>Myriapoda</taxon>
        <taxon>Chilopoda</taxon>
        <taxon>Pleurostigmophora</taxon>
        <taxon>Scolopendromorpha</taxon>
        <taxon>Scolopendridae</taxon>
        <taxon>Scolopendra</taxon>
    </lineage>
</organism>
<reference key="1">
    <citation type="journal article" date="2014" name="Mol. Biol. Evol.">
        <title>Clawing through evolution: toxin diversification and convergence in the ancient lineage Chilopoda (centipedes).</title>
        <authorList>
            <person name="Undheim E.A."/>
            <person name="Jones A."/>
            <person name="Clauser K.R."/>
            <person name="Holland J.W."/>
            <person name="Pineda S.S."/>
            <person name="King G.F."/>
            <person name="Fry B.G."/>
        </authorList>
    </citation>
    <scope>NUCLEOTIDE SEQUENCE [MRNA]</scope>
    <scope>NOMENCLATURE</scope>
    <source>
        <tissue>Venom gland</tissue>
    </source>
</reference>
<feature type="signal peptide" evidence="1">
    <location>
        <begin position="1"/>
        <end position="21"/>
    </location>
</feature>
<feature type="chain" id="PRO_0000446830" description="U-scoloptoxin(21)-Sm2a" evidence="4">
    <location>
        <begin position="22"/>
        <end position="69"/>
    </location>
</feature>
<feature type="region of interest" description="Disordered" evidence="2">
    <location>
        <begin position="46"/>
        <end position="69"/>
    </location>
</feature>
<feature type="compositionally biased region" description="Basic and acidic residues" evidence="2">
    <location>
        <begin position="60"/>
        <end position="69"/>
    </location>
</feature>
<name>TXL2A_SCOMO</name>